<keyword id="KW-0068">Autocatalytic cleavage</keyword>
<keyword id="KW-0963">Cytoplasm</keyword>
<keyword id="KW-0378">Hydrolase</keyword>
<keyword id="KW-0645">Protease</keyword>
<keyword id="KW-0647">Proteasome</keyword>
<keyword id="KW-1185">Reference proteome</keyword>
<keyword id="KW-0888">Threonine protease</keyword>
<keyword id="KW-0865">Zymogen</keyword>
<gene>
    <name evidence="1" type="primary">psmB</name>
    <name type="ordered locus">Mhun_0846</name>
</gene>
<comment type="function">
    <text evidence="1">Component of the proteasome core, a large protease complex with broad specificity involved in protein degradation.</text>
</comment>
<comment type="catalytic activity">
    <reaction evidence="1">
        <text>Cleavage of peptide bonds with very broad specificity.</text>
        <dbReference type="EC" id="3.4.25.1"/>
    </reaction>
</comment>
<comment type="activity regulation">
    <text evidence="1">The formation of the proteasomal ATPase PAN-20S proteasome complex, via the docking of the C-termini of PAN into the intersubunit pockets in the alpha-rings, triggers opening of the gate for substrate entry. Interconversion between the open-gate and close-gate conformations leads to a dynamic regulation of the 20S proteasome proteolysis activity.</text>
</comment>
<comment type="subunit">
    <text evidence="1">The 20S proteasome core is composed of 14 alpha and 14 beta subunits that assemble into four stacked heptameric rings, resulting in a barrel-shaped structure. The two inner rings, each composed of seven catalytic beta subunits, are sandwiched by two outer rings, each composed of seven alpha subunits. The catalytic chamber with the active sites is on the inside of the barrel. Has a gated structure, the ends of the cylinder being occluded by the N-termini of the alpha-subunits. Is capped at one or both ends by the proteasome regulatory ATPase, PAN.</text>
</comment>
<comment type="subcellular location">
    <subcellularLocation>
        <location evidence="1">Cytoplasm</location>
    </subcellularLocation>
</comment>
<comment type="similarity">
    <text evidence="1">Belongs to the peptidase T1B family.</text>
</comment>
<proteinExistence type="inferred from homology"/>
<evidence type="ECO:0000255" key="1">
    <source>
        <dbReference type="HAMAP-Rule" id="MF_02113"/>
    </source>
</evidence>
<reference key="1">
    <citation type="journal article" date="2016" name="Stand. Genomic Sci.">
        <title>Complete genome sequence of Methanospirillum hungatei type strain JF1.</title>
        <authorList>
            <person name="Gunsalus R.P."/>
            <person name="Cook L.E."/>
            <person name="Crable B."/>
            <person name="Rohlin L."/>
            <person name="McDonald E."/>
            <person name="Mouttaki H."/>
            <person name="Sieber J.R."/>
            <person name="Poweleit N."/>
            <person name="Zhou H."/>
            <person name="Lapidus A.L."/>
            <person name="Daligault H.E."/>
            <person name="Land M."/>
            <person name="Gilna P."/>
            <person name="Ivanova N."/>
            <person name="Kyrpides N."/>
            <person name="Culley D.E."/>
            <person name="McInerney M.J."/>
        </authorList>
    </citation>
    <scope>NUCLEOTIDE SEQUENCE [LARGE SCALE GENOMIC DNA]</scope>
    <source>
        <strain>ATCC 27890 / DSM 864 / NBRC 100397 / JF-1</strain>
    </source>
</reference>
<dbReference type="EC" id="3.4.25.1" evidence="1"/>
<dbReference type="EMBL" id="CP000254">
    <property type="protein sequence ID" value="ABD40598.1"/>
    <property type="molecule type" value="Genomic_DNA"/>
</dbReference>
<dbReference type="RefSeq" id="WP_011447877.1">
    <property type="nucleotide sequence ID" value="NC_007796.1"/>
</dbReference>
<dbReference type="SMR" id="Q2FQL8"/>
<dbReference type="FunCoup" id="Q2FQL8">
    <property type="interactions" value="128"/>
</dbReference>
<dbReference type="STRING" id="323259.Mhun_0846"/>
<dbReference type="MEROPS" id="T01.002"/>
<dbReference type="EnsemblBacteria" id="ABD40598">
    <property type="protein sequence ID" value="ABD40598"/>
    <property type="gene ID" value="Mhun_0846"/>
</dbReference>
<dbReference type="GeneID" id="3922044"/>
<dbReference type="KEGG" id="mhu:Mhun_0846"/>
<dbReference type="eggNOG" id="arCOG00970">
    <property type="taxonomic scope" value="Archaea"/>
</dbReference>
<dbReference type="HOGENOM" id="CLU_035750_7_2_2"/>
<dbReference type="InParanoid" id="Q2FQL8"/>
<dbReference type="OrthoDB" id="6330at2157"/>
<dbReference type="Proteomes" id="UP000001941">
    <property type="component" value="Chromosome"/>
</dbReference>
<dbReference type="GO" id="GO:0005737">
    <property type="term" value="C:cytoplasm"/>
    <property type="evidence" value="ECO:0007669"/>
    <property type="project" value="UniProtKB-SubCell"/>
</dbReference>
<dbReference type="GO" id="GO:0019774">
    <property type="term" value="C:proteasome core complex, beta-subunit complex"/>
    <property type="evidence" value="ECO:0007669"/>
    <property type="project" value="UniProtKB-UniRule"/>
</dbReference>
<dbReference type="GO" id="GO:0004298">
    <property type="term" value="F:threonine-type endopeptidase activity"/>
    <property type="evidence" value="ECO:0007669"/>
    <property type="project" value="UniProtKB-UniRule"/>
</dbReference>
<dbReference type="GO" id="GO:0010498">
    <property type="term" value="P:proteasomal protein catabolic process"/>
    <property type="evidence" value="ECO:0007669"/>
    <property type="project" value="UniProtKB-UniRule"/>
</dbReference>
<dbReference type="CDD" id="cd03764">
    <property type="entry name" value="proteasome_beta_archeal"/>
    <property type="match status" value="1"/>
</dbReference>
<dbReference type="FunFam" id="3.60.20.10:FF:000049">
    <property type="entry name" value="Proteasome subunit beta"/>
    <property type="match status" value="1"/>
</dbReference>
<dbReference type="Gene3D" id="3.60.20.10">
    <property type="entry name" value="Glutamine Phosphoribosylpyrophosphate, subunit 1, domain 1"/>
    <property type="match status" value="1"/>
</dbReference>
<dbReference type="HAMAP" id="MF_02113_A">
    <property type="entry name" value="Proteasome_B_A"/>
    <property type="match status" value="1"/>
</dbReference>
<dbReference type="InterPro" id="IPR029055">
    <property type="entry name" value="Ntn_hydrolases_N"/>
</dbReference>
<dbReference type="InterPro" id="IPR019983">
    <property type="entry name" value="Pept_T1A_Psome_bsu_arc"/>
</dbReference>
<dbReference type="InterPro" id="IPR000243">
    <property type="entry name" value="Pept_T1A_subB"/>
</dbReference>
<dbReference type="InterPro" id="IPR016050">
    <property type="entry name" value="Proteasome_bsu_CS"/>
</dbReference>
<dbReference type="InterPro" id="IPR001353">
    <property type="entry name" value="Proteasome_sua/b"/>
</dbReference>
<dbReference type="InterPro" id="IPR023333">
    <property type="entry name" value="Proteasome_suB-type"/>
</dbReference>
<dbReference type="NCBIfam" id="TIGR03634">
    <property type="entry name" value="arc_protsome_B"/>
    <property type="match status" value="1"/>
</dbReference>
<dbReference type="PANTHER" id="PTHR32194:SF0">
    <property type="entry name" value="ATP-DEPENDENT PROTEASE SUBUNIT HSLV"/>
    <property type="match status" value="1"/>
</dbReference>
<dbReference type="PANTHER" id="PTHR32194">
    <property type="entry name" value="METALLOPROTEASE TLDD"/>
    <property type="match status" value="1"/>
</dbReference>
<dbReference type="Pfam" id="PF00227">
    <property type="entry name" value="Proteasome"/>
    <property type="match status" value="1"/>
</dbReference>
<dbReference type="PRINTS" id="PR00141">
    <property type="entry name" value="PROTEASOME"/>
</dbReference>
<dbReference type="SUPFAM" id="SSF56235">
    <property type="entry name" value="N-terminal nucleophile aminohydrolases (Ntn hydrolases)"/>
    <property type="match status" value="1"/>
</dbReference>
<dbReference type="PROSITE" id="PS00854">
    <property type="entry name" value="PROTEASOME_BETA_1"/>
    <property type="match status" value="1"/>
</dbReference>
<dbReference type="PROSITE" id="PS51476">
    <property type="entry name" value="PROTEASOME_BETA_2"/>
    <property type="match status" value="1"/>
</dbReference>
<accession>Q2FQL8</accession>
<organism>
    <name type="scientific">Methanospirillum hungatei JF-1 (strain ATCC 27890 / DSM 864 / NBRC 100397 / JF-1)</name>
    <dbReference type="NCBI Taxonomy" id="323259"/>
    <lineage>
        <taxon>Archaea</taxon>
        <taxon>Methanobacteriati</taxon>
        <taxon>Methanobacteriota</taxon>
        <taxon>Stenosarchaea group</taxon>
        <taxon>Methanomicrobia</taxon>
        <taxon>Methanomicrobiales</taxon>
        <taxon>Methanospirillaceae</taxon>
        <taxon>Methanospirillum</taxon>
    </lineage>
</organism>
<name>PSB_METHJ</name>
<sequence>MVEQSDTMKGTTTVGIVFETGVVLASEKRATMGYLISNKTAKKIYQIAPRIGLTTAGGVGDAQQLARLMTVEANLYEIRRGKRISVQAASTLLSNILHGNRMFPFYVQLLIGGVDETGPVLFSVDAVGGTGKEDGIVATGSGSPMAYGVLEDRYTLGMDERSAIELAIRALRSAIKRDAGSGEGVAVVVITEDSYHELSDEEISVLTPN</sequence>
<feature type="propeptide" id="PRO_0000397378" description="Removed in mature form; by autocatalysis" evidence="1">
    <location>
        <begin position="1"/>
        <end position="10"/>
    </location>
</feature>
<feature type="chain" id="PRO_0000397379" description="Proteasome subunit beta">
    <location>
        <begin position="11"/>
        <end position="209"/>
    </location>
</feature>
<feature type="active site" description="Nucleophile" evidence="1">
    <location>
        <position position="11"/>
    </location>
</feature>
<protein>
    <recommendedName>
        <fullName evidence="1">Proteasome subunit beta</fullName>
        <ecNumber evidence="1">3.4.25.1</ecNumber>
    </recommendedName>
    <alternativeName>
        <fullName evidence="1">20S proteasome beta subunit</fullName>
    </alternativeName>
    <alternativeName>
        <fullName evidence="1">Proteasome core protein PsmB</fullName>
    </alternativeName>
</protein>